<protein>
    <recommendedName>
        <fullName evidence="5">Dolichol kinase EVAN</fullName>
        <ecNumber>2.7.1.108</ecNumber>
    </recommendedName>
</protein>
<reference key="1">
    <citation type="journal article" date="2000" name="Nature">
        <title>Sequence and analysis of chromosome 3 of the plant Arabidopsis thaliana.</title>
        <authorList>
            <person name="Salanoubat M."/>
            <person name="Lemcke K."/>
            <person name="Rieger M."/>
            <person name="Ansorge W."/>
            <person name="Unseld M."/>
            <person name="Fartmann B."/>
            <person name="Valle G."/>
            <person name="Bloecker H."/>
            <person name="Perez-Alonso M."/>
            <person name="Obermaier B."/>
            <person name="Delseny M."/>
            <person name="Boutry M."/>
            <person name="Grivell L.A."/>
            <person name="Mache R."/>
            <person name="Puigdomenech P."/>
            <person name="De Simone V."/>
            <person name="Choisne N."/>
            <person name="Artiguenave F."/>
            <person name="Robert C."/>
            <person name="Brottier P."/>
            <person name="Wincker P."/>
            <person name="Cattolico L."/>
            <person name="Weissenbach J."/>
            <person name="Saurin W."/>
            <person name="Quetier F."/>
            <person name="Schaefer M."/>
            <person name="Mueller-Auer S."/>
            <person name="Gabel C."/>
            <person name="Fuchs M."/>
            <person name="Benes V."/>
            <person name="Wurmbach E."/>
            <person name="Drzonek H."/>
            <person name="Erfle H."/>
            <person name="Jordan N."/>
            <person name="Bangert S."/>
            <person name="Wiedelmann R."/>
            <person name="Kranz H."/>
            <person name="Voss H."/>
            <person name="Holland R."/>
            <person name="Brandt P."/>
            <person name="Nyakatura G."/>
            <person name="Vezzi A."/>
            <person name="D'Angelo M."/>
            <person name="Pallavicini A."/>
            <person name="Toppo S."/>
            <person name="Simionati B."/>
            <person name="Conrad A."/>
            <person name="Hornischer K."/>
            <person name="Kauer G."/>
            <person name="Loehnert T.-H."/>
            <person name="Nordsiek G."/>
            <person name="Reichelt J."/>
            <person name="Scharfe M."/>
            <person name="Schoen O."/>
            <person name="Bargues M."/>
            <person name="Terol J."/>
            <person name="Climent J."/>
            <person name="Navarro P."/>
            <person name="Collado C."/>
            <person name="Perez-Perez A."/>
            <person name="Ottenwaelder B."/>
            <person name="Duchemin D."/>
            <person name="Cooke R."/>
            <person name="Laudie M."/>
            <person name="Berger-Llauro C."/>
            <person name="Purnelle B."/>
            <person name="Masuy D."/>
            <person name="de Haan M."/>
            <person name="Maarse A.C."/>
            <person name="Alcaraz J.-P."/>
            <person name="Cottet A."/>
            <person name="Casacuberta E."/>
            <person name="Monfort A."/>
            <person name="Argiriou A."/>
            <person name="Flores M."/>
            <person name="Liguori R."/>
            <person name="Vitale D."/>
            <person name="Mannhaupt G."/>
            <person name="Haase D."/>
            <person name="Schoof H."/>
            <person name="Rudd S."/>
            <person name="Zaccaria P."/>
            <person name="Mewes H.-W."/>
            <person name="Mayer K.F.X."/>
            <person name="Kaul S."/>
            <person name="Town C.D."/>
            <person name="Koo H.L."/>
            <person name="Tallon L.J."/>
            <person name="Jenkins J."/>
            <person name="Rooney T."/>
            <person name="Rizzo M."/>
            <person name="Walts A."/>
            <person name="Utterback T."/>
            <person name="Fujii C.Y."/>
            <person name="Shea T.P."/>
            <person name="Creasy T.H."/>
            <person name="Haas B."/>
            <person name="Maiti R."/>
            <person name="Wu D."/>
            <person name="Peterson J."/>
            <person name="Van Aken S."/>
            <person name="Pai G."/>
            <person name="Militscher J."/>
            <person name="Sellers P."/>
            <person name="Gill J.E."/>
            <person name="Feldblyum T.V."/>
            <person name="Preuss D."/>
            <person name="Lin X."/>
            <person name="Nierman W.C."/>
            <person name="Salzberg S.L."/>
            <person name="White O."/>
            <person name="Venter J.C."/>
            <person name="Fraser C.M."/>
            <person name="Kaneko T."/>
            <person name="Nakamura Y."/>
            <person name="Sato S."/>
            <person name="Kato T."/>
            <person name="Asamizu E."/>
            <person name="Sasamoto S."/>
            <person name="Kimura T."/>
            <person name="Idesawa K."/>
            <person name="Kawashima K."/>
            <person name="Kishida Y."/>
            <person name="Kiyokawa C."/>
            <person name="Kohara M."/>
            <person name="Matsumoto M."/>
            <person name="Matsuno A."/>
            <person name="Muraki A."/>
            <person name="Nakayama S."/>
            <person name="Nakazaki N."/>
            <person name="Shinpo S."/>
            <person name="Takeuchi C."/>
            <person name="Wada T."/>
            <person name="Watanabe A."/>
            <person name="Yamada M."/>
            <person name="Yasuda M."/>
            <person name="Tabata S."/>
        </authorList>
    </citation>
    <scope>NUCLEOTIDE SEQUENCE [LARGE SCALE GENOMIC DNA]</scope>
    <source>
        <strain>cv. Columbia</strain>
    </source>
</reference>
<reference key="2">
    <citation type="journal article" date="2017" name="Plant J.">
        <title>Araport11: a complete reannotation of the Arabidopsis thaliana reference genome.</title>
        <authorList>
            <person name="Cheng C.Y."/>
            <person name="Krishnakumar V."/>
            <person name="Chan A.P."/>
            <person name="Thibaud-Nissen F."/>
            <person name="Schobel S."/>
            <person name="Town C.D."/>
        </authorList>
    </citation>
    <scope>GENOME REANNOTATION</scope>
    <source>
        <strain>cv. Columbia</strain>
    </source>
</reference>
<reference key="3">
    <citation type="journal article" date="2003" name="Science">
        <title>Empirical analysis of transcriptional activity in the Arabidopsis genome.</title>
        <authorList>
            <person name="Yamada K."/>
            <person name="Lim J."/>
            <person name="Dale J.M."/>
            <person name="Chen H."/>
            <person name="Shinn P."/>
            <person name="Palm C.J."/>
            <person name="Southwick A.M."/>
            <person name="Wu H.C."/>
            <person name="Kim C.J."/>
            <person name="Nguyen M."/>
            <person name="Pham P.K."/>
            <person name="Cheuk R.F."/>
            <person name="Karlin-Newmann G."/>
            <person name="Liu S.X."/>
            <person name="Lam B."/>
            <person name="Sakano H."/>
            <person name="Wu T."/>
            <person name="Yu G."/>
            <person name="Miranda M."/>
            <person name="Quach H.L."/>
            <person name="Tripp M."/>
            <person name="Chang C.H."/>
            <person name="Lee J.M."/>
            <person name="Toriumi M.J."/>
            <person name="Chan M.M."/>
            <person name="Tang C.C."/>
            <person name="Onodera C.S."/>
            <person name="Deng J.M."/>
            <person name="Akiyama K."/>
            <person name="Ansari Y."/>
            <person name="Arakawa T."/>
            <person name="Banh J."/>
            <person name="Banno F."/>
            <person name="Bowser L."/>
            <person name="Brooks S.Y."/>
            <person name="Carninci P."/>
            <person name="Chao Q."/>
            <person name="Choy N."/>
            <person name="Enju A."/>
            <person name="Goldsmith A.D."/>
            <person name="Gurjal M."/>
            <person name="Hansen N.F."/>
            <person name="Hayashizaki Y."/>
            <person name="Johnson-Hopson C."/>
            <person name="Hsuan V.W."/>
            <person name="Iida K."/>
            <person name="Karnes M."/>
            <person name="Khan S."/>
            <person name="Koesema E."/>
            <person name="Ishida J."/>
            <person name="Jiang P.X."/>
            <person name="Jones T."/>
            <person name="Kawai J."/>
            <person name="Kamiya A."/>
            <person name="Meyers C."/>
            <person name="Nakajima M."/>
            <person name="Narusaka M."/>
            <person name="Seki M."/>
            <person name="Sakurai T."/>
            <person name="Satou M."/>
            <person name="Tamse R."/>
            <person name="Vaysberg M."/>
            <person name="Wallender E.K."/>
            <person name="Wong C."/>
            <person name="Yamamura Y."/>
            <person name="Yuan S."/>
            <person name="Shinozaki K."/>
            <person name="Davis R.W."/>
            <person name="Theologis A."/>
            <person name="Ecker J.R."/>
        </authorList>
    </citation>
    <scope>NUCLEOTIDE SEQUENCE [LARGE SCALE MRNA]</scope>
    <source>
        <strain>cv. Columbia</strain>
    </source>
</reference>
<reference key="4">
    <citation type="journal article" date="2015" name="PLoS Biol.">
        <title>TURAN and EVAN mediate pollen tube reception in Arabidopsis Synergids through protein glycosylation.</title>
        <authorList>
            <person name="Lindner H."/>
            <person name="Kessler S.A."/>
            <person name="Mueller L.M."/>
            <person name="Shimosato-Asano H."/>
            <person name="Boisson-Dernier A."/>
            <person name="Grossniklaus U."/>
        </authorList>
    </citation>
    <scope>FUNCTION</scope>
    <scope>DISRUPTION PHENOTYPE</scope>
    <scope>SUBCELLULAR LOCATION</scope>
    <source>
        <strain>cv. Columbia</strain>
    </source>
</reference>
<accession>F4J4C8</accession>
<accession>Q8VXX8</accession>
<accession>Q9LXH2</accession>
<evidence type="ECO:0000250" key="1">
    <source>
        <dbReference type="UniProtKB" id="Q9UPQ8"/>
    </source>
</evidence>
<evidence type="ECO:0000255" key="2"/>
<evidence type="ECO:0000255" key="3">
    <source>
        <dbReference type="PROSITE-ProRule" id="PRU00498"/>
    </source>
</evidence>
<evidence type="ECO:0000269" key="4">
    <source>
    </source>
</evidence>
<evidence type="ECO:0000303" key="5">
    <source>
    </source>
</evidence>
<evidence type="ECO:0000305" key="6"/>
<evidence type="ECO:0000312" key="7">
    <source>
        <dbReference type="EMBL" id="AEE77982.1"/>
    </source>
</evidence>
<evidence type="ECO:0000312" key="8">
    <source>
        <dbReference type="EMBL" id="CAB89319.1"/>
    </source>
</evidence>
<evidence type="ECO:0000312" key="9">
    <source>
        <dbReference type="Proteomes" id="UP000006548"/>
    </source>
</evidence>
<sequence>MKTTATSFVTGERVVVFVVVSRILLSLPLSLISHGFSLFLLSLSAFLVEIRVETSPFLLSHFSSRRGASSGILLGAVTLPSVMISKLVQLSRAISIHEAEQDELAHVTMQYWAASASCCAILIYLSVIMSQVRKDESLSSSSIWLTRVSLTGTVLYGVACFVSLSMISHTGLNTSLKMLWMLFHGLAAVKLIRHLLCTFPSCASIGEALLVTSGLVLYFGDFLACTIAKIFEKLIPVDLVSISYGIKRTETGIIVQGLLLGLLLFPMVFRFVLHIYESSLRKRDARQRNCSDAAKSVLFFVSLLFFMVVAVPSWMQFVHDFNQHPFLWVLTFVFSEPLKRLSLCIYWILLIVVSVSRFYNISRSSKVERILLRKYYHLMAVLMFLPALVLQPKFLDLAFGAALAVFVALEIIRIWRIQPLGEPLHQFMNAFTDHRDSEHLIVSHFSLLLGCALPIWMSSGFNDRALSPFAGILSLGIGDTMASMVGHKYGVLRWSKTGKKTVEGTAAGITSMMAVCFVLVPILASMGYILSQGWWSLLVAVTATGMLEAYTAQLDNAFIPLVFYSLLCL</sequence>
<keyword id="KW-0256">Endoplasmic reticulum</keyword>
<keyword id="KW-0325">Glycoprotein</keyword>
<keyword id="KW-0418">Kinase</keyword>
<keyword id="KW-0472">Membrane</keyword>
<keyword id="KW-1185">Reference proteome</keyword>
<keyword id="KW-0808">Transferase</keyword>
<keyword id="KW-0812">Transmembrane</keyword>
<keyword id="KW-1133">Transmembrane helix</keyword>
<name>EVN_ARATH</name>
<proteinExistence type="evidence at transcript level"/>
<feature type="chain" id="PRO_0000433635" description="Dolichol kinase EVAN">
    <location>
        <begin position="1"/>
        <end position="569"/>
    </location>
</feature>
<feature type="topological domain" description="Cytoplasmic" evidence="6">
    <location>
        <begin position="1"/>
        <end position="22"/>
    </location>
</feature>
<feature type="transmembrane region" description="Helical" evidence="2">
    <location>
        <begin position="23"/>
        <end position="43"/>
    </location>
</feature>
<feature type="topological domain" description="Lumenal" evidence="6">
    <location>
        <begin position="44"/>
        <end position="67"/>
    </location>
</feature>
<feature type="transmembrane region" description="Helical" evidence="2">
    <location>
        <begin position="68"/>
        <end position="88"/>
    </location>
</feature>
<feature type="topological domain" description="Cytoplasmic" evidence="6">
    <location>
        <begin position="89"/>
        <end position="108"/>
    </location>
</feature>
<feature type="transmembrane region" description="Helical" evidence="2">
    <location>
        <begin position="109"/>
        <end position="129"/>
    </location>
</feature>
<feature type="topological domain" description="Lumenal" evidence="6">
    <location>
        <begin position="130"/>
        <end position="147"/>
    </location>
</feature>
<feature type="transmembrane region" description="Helical" evidence="2">
    <location>
        <begin position="148"/>
        <end position="168"/>
    </location>
</feature>
<feature type="topological domain" description="Cytoplasmic" evidence="6">
    <location>
        <begin position="169"/>
        <end position="178"/>
    </location>
</feature>
<feature type="transmembrane region" description="Helical" evidence="2">
    <location>
        <begin position="179"/>
        <end position="199"/>
    </location>
</feature>
<feature type="topological domain" description="Lumenal" evidence="6">
    <location>
        <begin position="200"/>
        <end position="207"/>
    </location>
</feature>
<feature type="transmembrane region" description="Helical" evidence="2">
    <location>
        <begin position="208"/>
        <end position="228"/>
    </location>
</feature>
<feature type="topological domain" description="Cytoplasmic" evidence="6">
    <location>
        <begin position="229"/>
        <end position="252"/>
    </location>
</feature>
<feature type="transmembrane region" description="Helical" evidence="2">
    <location>
        <begin position="253"/>
        <end position="273"/>
    </location>
</feature>
<feature type="topological domain" description="Lumenal" evidence="6">
    <location>
        <begin position="274"/>
        <end position="296"/>
    </location>
</feature>
<feature type="transmembrane region" description="Helical" evidence="2">
    <location>
        <begin position="297"/>
        <end position="317"/>
    </location>
</feature>
<feature type="topological domain" description="Cytoplasmic" evidence="6">
    <location>
        <begin position="318"/>
        <end position="340"/>
    </location>
</feature>
<feature type="transmembrane region" description="Helical" evidence="2">
    <location>
        <begin position="341"/>
        <end position="361"/>
    </location>
</feature>
<feature type="topological domain" description="Lumenal" evidence="6">
    <location>
        <begin position="362"/>
        <end position="369"/>
    </location>
</feature>
<feature type="transmembrane region" description="Helical" evidence="2">
    <location>
        <begin position="370"/>
        <end position="390"/>
    </location>
</feature>
<feature type="topological domain" description="Cytoplasmic" evidence="6">
    <location>
        <begin position="391"/>
        <end position="393"/>
    </location>
</feature>
<feature type="transmembrane region" description="Helical" evidence="2">
    <location>
        <begin position="394"/>
        <end position="414"/>
    </location>
</feature>
<feature type="topological domain" description="Lumenal" evidence="6">
    <location>
        <begin position="415"/>
        <end position="440"/>
    </location>
</feature>
<feature type="transmembrane region" description="Helical" evidence="2">
    <location>
        <begin position="441"/>
        <end position="461"/>
    </location>
</feature>
<feature type="topological domain" description="Cytoplasmic" evidence="6">
    <location>
        <begin position="462"/>
        <end position="464"/>
    </location>
</feature>
<feature type="transmembrane region" description="Helical" evidence="2">
    <location>
        <begin position="465"/>
        <end position="485"/>
    </location>
</feature>
<feature type="topological domain" description="Lumenal" evidence="6">
    <location>
        <begin position="486"/>
        <end position="508"/>
    </location>
</feature>
<feature type="transmembrane region" description="Helical" evidence="2">
    <location>
        <begin position="509"/>
        <end position="529"/>
    </location>
</feature>
<feature type="topological domain" description="Cytoplasmic" evidence="6">
    <location>
        <begin position="530"/>
        <end position="548"/>
    </location>
</feature>
<feature type="transmembrane region" description="Helical" evidence="2">
    <location>
        <begin position="549"/>
        <end position="569"/>
    </location>
</feature>
<feature type="region of interest" description="CTP-binding" evidence="1">
    <location>
        <begin position="487"/>
        <end position="503"/>
    </location>
</feature>
<feature type="glycosylation site" description="N-linked (GlcNAc...) asparagine" evidence="3">
    <location>
        <position position="289"/>
    </location>
</feature>
<feature type="sequence conflict" description="In Ref. 3; AAL67067." evidence="6" ref="3">
    <original>I</original>
    <variation>V</variation>
    <location>
        <position position="411"/>
    </location>
</feature>
<feature type="sequence conflict" description="In Ref. 3; AAL67067." evidence="6" ref="3">
    <original>P</original>
    <variation>T</variation>
    <location>
        <position position="419"/>
    </location>
</feature>
<gene>
    <name evidence="5" type="primary">EVN</name>
    <name evidence="7" type="ordered locus">At3g45040</name>
    <name evidence="8" type="ORF">F14D17.110</name>
</gene>
<comment type="function">
    <text evidence="4">Essential for pollen development. Involved in protein N-glycosylation in the endoplasmic reticulum (ER), especially in the female gametophyte. Mediates pollen tube (PT) reception in synergids through protein glycosylation.</text>
</comment>
<comment type="catalytic activity">
    <reaction>
        <text>a di-trans,poly-cis-dolichol + CTP = a di-trans,poly-cis-dolichyl phosphate + CDP + H(+)</text>
        <dbReference type="Rhea" id="RHEA:13133"/>
        <dbReference type="Rhea" id="RHEA-COMP:19495"/>
        <dbReference type="Rhea" id="RHEA-COMP:19498"/>
        <dbReference type="ChEBI" id="CHEBI:15378"/>
        <dbReference type="ChEBI" id="CHEBI:16091"/>
        <dbReference type="ChEBI" id="CHEBI:37563"/>
        <dbReference type="ChEBI" id="CHEBI:57683"/>
        <dbReference type="ChEBI" id="CHEBI:58069"/>
        <dbReference type="EC" id="2.7.1.108"/>
    </reaction>
</comment>
<comment type="subcellular location">
    <subcellularLocation>
        <location evidence="4">Endoplasmic reticulum membrane</location>
        <topology evidence="2">Multi-pass membrane protein</topology>
    </subcellularLocation>
</comment>
<comment type="disruption phenotype">
    <text evidence="4">Pollen tube (PT) overgrowth inside the female gametophyte (FG) without PT rupture. Degenerated pollen grains before maturation, during the early tricellular stage.</text>
</comment>
<comment type="similarity">
    <text evidence="6">Belongs to the polyprenol kinase family.</text>
</comment>
<comment type="sequence caution" evidence="6">
    <conflict type="erroneous gene model prediction">
        <sequence resource="EMBL-CDS" id="CAB89319"/>
    </conflict>
</comment>
<dbReference type="EC" id="2.7.1.108"/>
<dbReference type="EMBL" id="AL353992">
    <property type="protein sequence ID" value="CAB89319.1"/>
    <property type="status" value="ALT_SEQ"/>
    <property type="molecule type" value="Genomic_DNA"/>
</dbReference>
<dbReference type="EMBL" id="CP002686">
    <property type="protein sequence ID" value="AEE77982.1"/>
    <property type="molecule type" value="Genomic_DNA"/>
</dbReference>
<dbReference type="EMBL" id="AY074371">
    <property type="protein sequence ID" value="AAL67067.1"/>
    <property type="molecule type" value="mRNA"/>
</dbReference>
<dbReference type="PIR" id="T48980">
    <property type="entry name" value="T48980"/>
</dbReference>
<dbReference type="RefSeq" id="NP_190090.2">
    <property type="nucleotide sequence ID" value="NM_114373.4"/>
</dbReference>
<dbReference type="FunCoup" id="F4J4C8">
    <property type="interactions" value="1625"/>
</dbReference>
<dbReference type="STRING" id="3702.F4J4C8"/>
<dbReference type="GlyCosmos" id="F4J4C8">
    <property type="glycosylation" value="1 site, No reported glycans"/>
</dbReference>
<dbReference type="GlyGen" id="F4J4C8">
    <property type="glycosylation" value="1 site"/>
</dbReference>
<dbReference type="iPTMnet" id="F4J4C8"/>
<dbReference type="PaxDb" id="3702-AT3G45040.1"/>
<dbReference type="EnsemblPlants" id="AT3G45040.1">
    <property type="protein sequence ID" value="AT3G45040.1"/>
    <property type="gene ID" value="AT3G45040"/>
</dbReference>
<dbReference type="GeneID" id="823639"/>
<dbReference type="Gramene" id="AT3G45040.1">
    <property type="protein sequence ID" value="AT3G45040.1"/>
    <property type="gene ID" value="AT3G45040"/>
</dbReference>
<dbReference type="KEGG" id="ath:AT3G45040"/>
<dbReference type="Araport" id="AT3G45040"/>
<dbReference type="TAIR" id="AT3G45040">
    <property type="gene designation" value="DOK1"/>
</dbReference>
<dbReference type="eggNOG" id="KOG2468">
    <property type="taxonomic scope" value="Eukaryota"/>
</dbReference>
<dbReference type="HOGENOM" id="CLU_027611_1_0_1"/>
<dbReference type="InParanoid" id="F4J4C8"/>
<dbReference type="OrthoDB" id="377083at2759"/>
<dbReference type="BRENDA" id="2.7.1.108">
    <property type="organism ID" value="399"/>
</dbReference>
<dbReference type="PRO" id="PR:F4J4C8"/>
<dbReference type="Proteomes" id="UP000006548">
    <property type="component" value="Chromosome 3"/>
</dbReference>
<dbReference type="ExpressionAtlas" id="F4J4C8">
    <property type="expression patterns" value="baseline and differential"/>
</dbReference>
<dbReference type="GO" id="GO:0005783">
    <property type="term" value="C:endoplasmic reticulum"/>
    <property type="evidence" value="ECO:0000314"/>
    <property type="project" value="TAIR"/>
</dbReference>
<dbReference type="GO" id="GO:0005789">
    <property type="term" value="C:endoplasmic reticulum membrane"/>
    <property type="evidence" value="ECO:0007669"/>
    <property type="project" value="UniProtKB-SubCell"/>
</dbReference>
<dbReference type="GO" id="GO:0004168">
    <property type="term" value="F:dolichol kinase activity"/>
    <property type="evidence" value="ECO:0000250"/>
    <property type="project" value="TAIR"/>
</dbReference>
<dbReference type="GO" id="GO:0009555">
    <property type="term" value="P:pollen development"/>
    <property type="evidence" value="ECO:0000315"/>
    <property type="project" value="UniProtKB"/>
</dbReference>
<dbReference type="GO" id="GO:0010483">
    <property type="term" value="P:pollen tube reception"/>
    <property type="evidence" value="ECO:0000315"/>
    <property type="project" value="TAIR"/>
</dbReference>
<dbReference type="GO" id="GO:0006486">
    <property type="term" value="P:protein glycosylation"/>
    <property type="evidence" value="ECO:0000315"/>
    <property type="project" value="TAIR"/>
</dbReference>
<dbReference type="InterPro" id="IPR032974">
    <property type="entry name" value="Polypren_kinase"/>
</dbReference>
<dbReference type="PANTHER" id="PTHR13205:SF15">
    <property type="entry name" value="DOLICHOL KINASE"/>
    <property type="match status" value="1"/>
</dbReference>
<dbReference type="PANTHER" id="PTHR13205">
    <property type="entry name" value="TRANSMEMBRANE PROTEIN 15-RELATED"/>
    <property type="match status" value="1"/>
</dbReference>
<organism evidence="9">
    <name type="scientific">Arabidopsis thaliana</name>
    <name type="common">Mouse-ear cress</name>
    <dbReference type="NCBI Taxonomy" id="3702"/>
    <lineage>
        <taxon>Eukaryota</taxon>
        <taxon>Viridiplantae</taxon>
        <taxon>Streptophyta</taxon>
        <taxon>Embryophyta</taxon>
        <taxon>Tracheophyta</taxon>
        <taxon>Spermatophyta</taxon>
        <taxon>Magnoliopsida</taxon>
        <taxon>eudicotyledons</taxon>
        <taxon>Gunneridae</taxon>
        <taxon>Pentapetalae</taxon>
        <taxon>rosids</taxon>
        <taxon>malvids</taxon>
        <taxon>Brassicales</taxon>
        <taxon>Brassicaceae</taxon>
        <taxon>Camelineae</taxon>
        <taxon>Arabidopsis</taxon>
    </lineage>
</organism>